<keyword id="KW-0175">Coiled coil</keyword>
<keyword id="KW-0967">Endosome</keyword>
<keyword id="KW-1267">Proteomics identification</keyword>
<keyword id="KW-1185">Reference proteome</keyword>
<accession>A6NI56</accession>
<accession>G9JV18</accession>
<evidence type="ECO:0000255" key="1"/>
<evidence type="ECO:0000269" key="2">
    <source>
    </source>
</evidence>
<evidence type="ECO:0000305" key="3"/>
<evidence type="ECO:0000305" key="4">
    <source>
    </source>
</evidence>
<evidence type="ECO:0000312" key="5">
    <source>
        <dbReference type="HGNC" id="HGNC:34454"/>
    </source>
</evidence>
<name>CC154_HUMAN</name>
<feature type="chain" id="PRO_0000332270" description="Coiled-coil domain-containing protein 154">
    <location>
        <begin position="1"/>
        <end position="667"/>
    </location>
</feature>
<feature type="coiled-coil region" evidence="1">
    <location>
        <begin position="76"/>
        <end position="182"/>
    </location>
</feature>
<feature type="coiled-coil region" evidence="1">
    <location>
        <begin position="215"/>
        <end position="302"/>
    </location>
</feature>
<feature type="coiled-coil region" evidence="1">
    <location>
        <begin position="384"/>
        <end position="410"/>
    </location>
</feature>
<feature type="coiled-coil region" evidence="1">
    <location>
        <begin position="457"/>
        <end position="521"/>
    </location>
</feature>
<protein>
    <recommendedName>
        <fullName evidence="3">Coiled-coil domain-containing protein 154</fullName>
    </recommendedName>
</protein>
<proteinExistence type="evidence at protein level"/>
<comment type="subcellular location">
    <subcellularLocation>
        <location evidence="2">Early endosome</location>
    </subcellularLocation>
</comment>
<comment type="miscellaneous">
    <text evidence="4">Overexpression suppresses cell proliferation by inducing G2/M arrest.</text>
</comment>
<sequence length="667" mass="75408">MSELADSGPSGASAPSQLRAVTLEDLGLLLAGGLASPEPLSLEELSERYESSHPTSTASVPEQDTAKHWNQLEQWVVELQAEVACLREHKQRCERATRSLLRELLQVRARVQLQGSELRQLQQEARPAAQAPEKEAPEFSGLQNQMQALDKRLVEVREALTRLRRRQVQQEAERRGAEQEAGLRLAKLTDLLQQEEQGREVACGALQKNQEDSSRRVDLEVARMQAQVTKLGEEVSLRFLKREAKLCGFLQKSFLALEKRMKASESSRLKLEGSLRGELESRWEKLRGLMEERLRALQGQHEESHLLEQCQGLDAAVAQLTKFVQQNQASLNRVLLAEEKAWDAKGRLEESRAGELAAYVQENLEAAQLAGELARQEMHGELVLLREKSRALEASVAQLAGQLKELSGHLPALSSRLDLQEQMLGLRLSEAKTEWEGAERKSLEDLARWRKEVTEHLRGVREKVDGLPQQIESVSDKCLLHKSDSDLRISAEGKAREFKVGALRQELATLLSSVQLLKEDNPGRKIAEMQGKLATFQNQIMKLENCVQANKTIQNLRFNTEARLRTQEMATLWESVLRLWSEEGPRTPLGSWKALPSLVRPRVFIKDMAPGKVVPMNCWGVYQAVRWLRWKASLIKLRALRRPGGVLEKPHSQEQVQQLTPSLFIQK</sequence>
<gene>
    <name evidence="5" type="primary">CCDC154</name>
    <name evidence="5" type="synonym">C16orf29</name>
</gene>
<dbReference type="EMBL" id="JN935901">
    <property type="protein sequence ID" value="AEW67365.1"/>
    <property type="molecule type" value="mRNA"/>
</dbReference>
<dbReference type="EMBL" id="AL031600">
    <property type="status" value="NOT_ANNOTATED_CDS"/>
    <property type="molecule type" value="Genomic_DNA"/>
</dbReference>
<dbReference type="EMBL" id="AL032819">
    <property type="status" value="NOT_ANNOTATED_CDS"/>
    <property type="molecule type" value="Genomic_DNA"/>
</dbReference>
<dbReference type="EMBL" id="AL137252">
    <property type="status" value="NOT_ANNOTATED_CDS"/>
    <property type="molecule type" value="Genomic_DNA"/>
</dbReference>
<dbReference type="CCDS" id="CCDS92082.1"/>
<dbReference type="RefSeq" id="NP_001137452.1">
    <property type="nucleotide sequence ID" value="NM_001143980.3"/>
</dbReference>
<dbReference type="SMR" id="A6NI56"/>
<dbReference type="BioGRID" id="570763">
    <property type="interactions" value="5"/>
</dbReference>
<dbReference type="FunCoup" id="A6NI56">
    <property type="interactions" value="66"/>
</dbReference>
<dbReference type="IntAct" id="A6NI56">
    <property type="interactions" value="1"/>
</dbReference>
<dbReference type="STRING" id="9606.ENSP00000373828"/>
<dbReference type="iPTMnet" id="A6NI56"/>
<dbReference type="PhosphoSitePlus" id="A6NI56"/>
<dbReference type="BioMuta" id="CCDC154"/>
<dbReference type="jPOST" id="A6NI56"/>
<dbReference type="MassIVE" id="A6NI56"/>
<dbReference type="PaxDb" id="9606-ENSP00000373828"/>
<dbReference type="PeptideAtlas" id="A6NI56"/>
<dbReference type="DNASU" id="645811"/>
<dbReference type="Ensembl" id="ENST00000389176.4">
    <property type="protein sequence ID" value="ENSP00000373828.4"/>
    <property type="gene ID" value="ENSG00000197599.13"/>
</dbReference>
<dbReference type="GeneID" id="645811"/>
<dbReference type="KEGG" id="hsa:645811"/>
<dbReference type="MANE-Select" id="ENST00000389176.4">
    <property type="protein sequence ID" value="ENSP00000373828.4"/>
    <property type="RefSeq nucleotide sequence ID" value="NM_001143980.3"/>
    <property type="RefSeq protein sequence ID" value="NP_001137452.1"/>
</dbReference>
<dbReference type="UCSC" id="uc059oxj.1">
    <property type="organism name" value="human"/>
</dbReference>
<dbReference type="AGR" id="HGNC:34454"/>
<dbReference type="CTD" id="645811"/>
<dbReference type="DisGeNET" id="645811"/>
<dbReference type="GeneCards" id="CCDC154"/>
<dbReference type="HGNC" id="HGNC:34454">
    <property type="gene designation" value="CCDC154"/>
</dbReference>
<dbReference type="HPA" id="ENSG00000197599">
    <property type="expression patterns" value="Tissue enhanced (testis)"/>
</dbReference>
<dbReference type="MIM" id="618740">
    <property type="type" value="gene"/>
</dbReference>
<dbReference type="neXtProt" id="NX_A6NI56"/>
<dbReference type="OpenTargets" id="ENSG00000197599"/>
<dbReference type="eggNOG" id="ENOG502RF80">
    <property type="taxonomic scope" value="Eukaryota"/>
</dbReference>
<dbReference type="GeneTree" id="ENSGT00390000002278"/>
<dbReference type="InParanoid" id="A6NI56"/>
<dbReference type="OrthoDB" id="9445857at2759"/>
<dbReference type="PAN-GO" id="A6NI56">
    <property type="GO annotations" value="1 GO annotation based on evolutionary models"/>
</dbReference>
<dbReference type="PhylomeDB" id="A6NI56"/>
<dbReference type="TreeFam" id="TF351158"/>
<dbReference type="PathwayCommons" id="A6NI56"/>
<dbReference type="SignaLink" id="A6NI56"/>
<dbReference type="BioGRID-ORCS" id="645811">
    <property type="hits" value="4 hits in 386 CRISPR screens"/>
</dbReference>
<dbReference type="GenomeRNAi" id="645811"/>
<dbReference type="Pharos" id="A6NI56">
    <property type="development level" value="Tdark"/>
</dbReference>
<dbReference type="PRO" id="PR:A6NI56"/>
<dbReference type="Proteomes" id="UP000005640">
    <property type="component" value="Chromosome 16"/>
</dbReference>
<dbReference type="RNAct" id="A6NI56">
    <property type="molecule type" value="protein"/>
</dbReference>
<dbReference type="GO" id="GO:0005769">
    <property type="term" value="C:early endosome"/>
    <property type="evidence" value="ECO:0007669"/>
    <property type="project" value="UniProtKB-SubCell"/>
</dbReference>
<dbReference type="GO" id="GO:0035630">
    <property type="term" value="P:bone mineralization involved in bone maturation"/>
    <property type="evidence" value="ECO:0000318"/>
    <property type="project" value="GO_Central"/>
</dbReference>
<dbReference type="InterPro" id="IPR029512">
    <property type="entry name" value="CCDC154"/>
</dbReference>
<dbReference type="PANTHER" id="PTHR35153">
    <property type="entry name" value="COILED-COIL DOMAIN-CONTAINING PROTEIN 154"/>
    <property type="match status" value="1"/>
</dbReference>
<dbReference type="PANTHER" id="PTHR35153:SF1">
    <property type="entry name" value="COILED-COIL DOMAIN-CONTAINING PROTEIN 154"/>
    <property type="match status" value="1"/>
</dbReference>
<dbReference type="Pfam" id="PF15450">
    <property type="entry name" value="CCDC154"/>
    <property type="match status" value="1"/>
</dbReference>
<organism>
    <name type="scientific">Homo sapiens</name>
    <name type="common">Human</name>
    <dbReference type="NCBI Taxonomy" id="9606"/>
    <lineage>
        <taxon>Eukaryota</taxon>
        <taxon>Metazoa</taxon>
        <taxon>Chordata</taxon>
        <taxon>Craniata</taxon>
        <taxon>Vertebrata</taxon>
        <taxon>Euteleostomi</taxon>
        <taxon>Mammalia</taxon>
        <taxon>Eutheria</taxon>
        <taxon>Euarchontoglires</taxon>
        <taxon>Primates</taxon>
        <taxon>Haplorrhini</taxon>
        <taxon>Catarrhini</taxon>
        <taxon>Hominidae</taxon>
        <taxon>Homo</taxon>
    </lineage>
</organism>
<reference key="1">
    <citation type="journal article" date="2012" name="Cell Cycle">
        <title>Overexpression of a novel osteopetrosis-related gene CCDC154 suppresses cell proliferation by inducing G2/M arrest.</title>
        <authorList>
            <person name="Liao W."/>
            <person name="Zhao R."/>
            <person name="Lu L."/>
            <person name="Zhang R."/>
            <person name="Zou J."/>
            <person name="Xu T."/>
            <person name="Wu C."/>
            <person name="Tang J."/>
            <person name="Deng Y."/>
            <person name="Lu X."/>
        </authorList>
    </citation>
    <scope>NUCLEOTIDE SEQUENCE [MRNA]</scope>
    <scope>SUBCELLULAR LOCATION</scope>
</reference>
<reference key="2">
    <citation type="journal article" date="2004" name="Nature">
        <title>The sequence and analysis of duplication-rich human chromosome 16.</title>
        <authorList>
            <person name="Martin J."/>
            <person name="Han C."/>
            <person name="Gordon L.A."/>
            <person name="Terry A."/>
            <person name="Prabhakar S."/>
            <person name="She X."/>
            <person name="Xie G."/>
            <person name="Hellsten U."/>
            <person name="Chan Y.M."/>
            <person name="Altherr M."/>
            <person name="Couronne O."/>
            <person name="Aerts A."/>
            <person name="Bajorek E."/>
            <person name="Black S."/>
            <person name="Blumer H."/>
            <person name="Branscomb E."/>
            <person name="Brown N.C."/>
            <person name="Bruno W.J."/>
            <person name="Buckingham J.M."/>
            <person name="Callen D.F."/>
            <person name="Campbell C.S."/>
            <person name="Campbell M.L."/>
            <person name="Campbell E.W."/>
            <person name="Caoile C."/>
            <person name="Challacombe J.F."/>
            <person name="Chasteen L.A."/>
            <person name="Chertkov O."/>
            <person name="Chi H.C."/>
            <person name="Christensen M."/>
            <person name="Clark L.M."/>
            <person name="Cohn J.D."/>
            <person name="Denys M."/>
            <person name="Detter J.C."/>
            <person name="Dickson M."/>
            <person name="Dimitrijevic-Bussod M."/>
            <person name="Escobar J."/>
            <person name="Fawcett J.J."/>
            <person name="Flowers D."/>
            <person name="Fotopulos D."/>
            <person name="Glavina T."/>
            <person name="Gomez M."/>
            <person name="Gonzales E."/>
            <person name="Goodstein D."/>
            <person name="Goodwin L.A."/>
            <person name="Grady D.L."/>
            <person name="Grigoriev I."/>
            <person name="Groza M."/>
            <person name="Hammon N."/>
            <person name="Hawkins T."/>
            <person name="Haydu L."/>
            <person name="Hildebrand C.E."/>
            <person name="Huang W."/>
            <person name="Israni S."/>
            <person name="Jett J."/>
            <person name="Jewett P.B."/>
            <person name="Kadner K."/>
            <person name="Kimball H."/>
            <person name="Kobayashi A."/>
            <person name="Krawczyk M.-C."/>
            <person name="Leyba T."/>
            <person name="Longmire J.L."/>
            <person name="Lopez F."/>
            <person name="Lou Y."/>
            <person name="Lowry S."/>
            <person name="Ludeman T."/>
            <person name="Manohar C.F."/>
            <person name="Mark G.A."/>
            <person name="McMurray K.L."/>
            <person name="Meincke L.J."/>
            <person name="Morgan J."/>
            <person name="Moyzis R.K."/>
            <person name="Mundt M.O."/>
            <person name="Munk A.C."/>
            <person name="Nandkeshwar R.D."/>
            <person name="Pitluck S."/>
            <person name="Pollard M."/>
            <person name="Predki P."/>
            <person name="Parson-Quintana B."/>
            <person name="Ramirez L."/>
            <person name="Rash S."/>
            <person name="Retterer J."/>
            <person name="Ricke D.O."/>
            <person name="Robinson D.L."/>
            <person name="Rodriguez A."/>
            <person name="Salamov A."/>
            <person name="Saunders E.H."/>
            <person name="Scott D."/>
            <person name="Shough T."/>
            <person name="Stallings R.L."/>
            <person name="Stalvey M."/>
            <person name="Sutherland R.D."/>
            <person name="Tapia R."/>
            <person name="Tesmer J.G."/>
            <person name="Thayer N."/>
            <person name="Thompson L.S."/>
            <person name="Tice H."/>
            <person name="Torney D.C."/>
            <person name="Tran-Gyamfi M."/>
            <person name="Tsai M."/>
            <person name="Ulanovsky L.E."/>
            <person name="Ustaszewska A."/>
            <person name="Vo N."/>
            <person name="White P.S."/>
            <person name="Williams A.L."/>
            <person name="Wills P.L."/>
            <person name="Wu J.-R."/>
            <person name="Wu K."/>
            <person name="Yang J."/>
            <person name="DeJong P."/>
            <person name="Bruce D."/>
            <person name="Doggett N.A."/>
            <person name="Deaven L."/>
            <person name="Schmutz J."/>
            <person name="Grimwood J."/>
            <person name="Richardson P."/>
            <person name="Rokhsar D.S."/>
            <person name="Eichler E.E."/>
            <person name="Gilna P."/>
            <person name="Lucas S.M."/>
            <person name="Myers R.M."/>
            <person name="Rubin E.M."/>
            <person name="Pennacchio L.A."/>
        </authorList>
    </citation>
    <scope>NUCLEOTIDE SEQUENCE [LARGE SCALE GENOMIC DNA]</scope>
</reference>